<feature type="peptide" id="PRO_0000015780" description="Insulin B chain">
    <location>
        <begin position="1"/>
        <end position="30"/>
    </location>
</feature>
<feature type="peptide" id="PRO_0000015781" description="Insulin A chain">
    <location>
        <begin position="31"/>
        <end position="51"/>
    </location>
</feature>
<feature type="disulfide bond" description="Interchain (between B and A chains)" evidence="1">
    <location>
        <begin position="7"/>
        <end position="37"/>
    </location>
</feature>
<feature type="disulfide bond" description="Interchain (between B and A chains)" evidence="1">
    <location>
        <begin position="19"/>
        <end position="50"/>
    </location>
</feature>
<feature type="disulfide bond" evidence="1">
    <location>
        <begin position="36"/>
        <end position="41"/>
    </location>
</feature>
<feature type="non-consecutive residues" evidence="2">
    <location>
        <begin position="30"/>
        <end position="31"/>
    </location>
</feature>
<protein>
    <recommendedName>
        <fullName>Insulin</fullName>
    </recommendedName>
    <component>
        <recommendedName>
            <fullName>Insulin B chain</fullName>
        </recommendedName>
    </component>
    <component>
        <recommendedName>
            <fullName>Insulin A chain</fullName>
        </recommendedName>
    </component>
</protein>
<name>INS_CAPHI</name>
<sequence>FVNQHLCGSHLVEALYLVCGERGFFYTPKAGIVEQCCAGVCSLYQLENYCN</sequence>
<dbReference type="PIR" id="A01586">
    <property type="entry name" value="INGT"/>
</dbReference>
<dbReference type="SMR" id="P01319"/>
<dbReference type="Proteomes" id="UP000291000">
    <property type="component" value="Unassembled WGS sequence"/>
</dbReference>
<dbReference type="Proteomes" id="UP000694566">
    <property type="component" value="Unplaced"/>
</dbReference>
<dbReference type="GO" id="GO:0005615">
    <property type="term" value="C:extracellular space"/>
    <property type="evidence" value="ECO:0007669"/>
    <property type="project" value="UniProtKB-ARBA"/>
</dbReference>
<dbReference type="GO" id="GO:0005179">
    <property type="term" value="F:hormone activity"/>
    <property type="evidence" value="ECO:0007669"/>
    <property type="project" value="UniProtKB-KW"/>
</dbReference>
<dbReference type="GO" id="GO:1901701">
    <property type="term" value="P:cellular response to oxygen-containing compound"/>
    <property type="evidence" value="ECO:0007669"/>
    <property type="project" value="UniProtKB-ARBA"/>
</dbReference>
<dbReference type="GO" id="GO:0042593">
    <property type="term" value="P:glucose homeostasis"/>
    <property type="evidence" value="ECO:0007669"/>
    <property type="project" value="TreeGrafter"/>
</dbReference>
<dbReference type="GO" id="GO:0006006">
    <property type="term" value="P:glucose metabolic process"/>
    <property type="evidence" value="ECO:0007669"/>
    <property type="project" value="UniProtKB-KW"/>
</dbReference>
<dbReference type="GO" id="GO:0050714">
    <property type="term" value="P:positive regulation of protein secretion"/>
    <property type="evidence" value="ECO:0007669"/>
    <property type="project" value="TreeGrafter"/>
</dbReference>
<dbReference type="CDD" id="cd04367">
    <property type="entry name" value="IlGF_insulin_like"/>
    <property type="match status" value="1"/>
</dbReference>
<dbReference type="Gene3D" id="1.10.100.10">
    <property type="entry name" value="Insulin-like"/>
    <property type="match status" value="2"/>
</dbReference>
<dbReference type="InterPro" id="IPR004825">
    <property type="entry name" value="Insulin"/>
</dbReference>
<dbReference type="InterPro" id="IPR016179">
    <property type="entry name" value="Insulin-like"/>
</dbReference>
<dbReference type="InterPro" id="IPR036438">
    <property type="entry name" value="Insulin-like_sf"/>
</dbReference>
<dbReference type="InterPro" id="IPR022353">
    <property type="entry name" value="Insulin_CS"/>
</dbReference>
<dbReference type="InterPro" id="IPR022352">
    <property type="entry name" value="Insulin_family"/>
</dbReference>
<dbReference type="PANTHER" id="PTHR11454:SF9">
    <property type="entry name" value="INSULIN"/>
    <property type="match status" value="1"/>
</dbReference>
<dbReference type="PANTHER" id="PTHR11454">
    <property type="entry name" value="INSULIN/INSULIN GROWTH FACTOR"/>
    <property type="match status" value="1"/>
</dbReference>
<dbReference type="Pfam" id="PF00049">
    <property type="entry name" value="Insulin"/>
    <property type="match status" value="1"/>
</dbReference>
<dbReference type="PRINTS" id="PR00277">
    <property type="entry name" value="INSULIN"/>
</dbReference>
<dbReference type="PRINTS" id="PR00276">
    <property type="entry name" value="INSULINFAMLY"/>
</dbReference>
<dbReference type="SMART" id="SM00078">
    <property type="entry name" value="IlGF"/>
    <property type="match status" value="1"/>
</dbReference>
<dbReference type="SUPFAM" id="SSF56994">
    <property type="entry name" value="Insulin-like"/>
    <property type="match status" value="1"/>
</dbReference>
<dbReference type="PROSITE" id="PS00262">
    <property type="entry name" value="INSULIN"/>
    <property type="match status" value="1"/>
</dbReference>
<organism>
    <name type="scientific">Capra hircus</name>
    <name type="common">Goat</name>
    <dbReference type="NCBI Taxonomy" id="9925"/>
    <lineage>
        <taxon>Eukaryota</taxon>
        <taxon>Metazoa</taxon>
        <taxon>Chordata</taxon>
        <taxon>Craniata</taxon>
        <taxon>Vertebrata</taxon>
        <taxon>Euteleostomi</taxon>
        <taxon>Mammalia</taxon>
        <taxon>Eutheria</taxon>
        <taxon>Laurasiatheria</taxon>
        <taxon>Artiodactyla</taxon>
        <taxon>Ruminantia</taxon>
        <taxon>Pecora</taxon>
        <taxon>Bovidae</taxon>
        <taxon>Caprinae</taxon>
        <taxon>Capra</taxon>
    </lineage>
</organism>
<comment type="function">
    <text>Insulin decreases blood glucose concentration. It increases cell permeability to monosaccharides, amino acids and fatty acids. It accelerates glycolysis, the pentose phosphate cycle, and glycogen synthesis in liver.</text>
</comment>
<comment type="subunit">
    <text evidence="1">Heterodimer of a B chain and an A chain linked by two disulfide bonds.</text>
</comment>
<comment type="subcellular location">
    <subcellularLocation>
        <location>Secreted</location>
    </subcellularLocation>
</comment>
<comment type="similarity">
    <text evidence="2">Belongs to the insulin family.</text>
</comment>
<gene>
    <name type="primary">INS</name>
</gene>
<reference key="1">
    <citation type="journal article" date="1966" name="Am. J. Med.">
        <title>Species variation in the amino acid sequence of insulin.</title>
        <authorList>
            <person name="Smith L.F."/>
        </authorList>
    </citation>
    <scope>PROTEIN SEQUENCE</scope>
</reference>
<keyword id="KW-0119">Carbohydrate metabolism</keyword>
<keyword id="KW-0903">Direct protein sequencing</keyword>
<keyword id="KW-1015">Disulfide bond</keyword>
<keyword id="KW-0313">Glucose metabolism</keyword>
<keyword id="KW-0372">Hormone</keyword>
<keyword id="KW-1185">Reference proteome</keyword>
<keyword id="KW-0964">Secreted</keyword>
<evidence type="ECO:0000250" key="1">
    <source>
        <dbReference type="UniProtKB" id="P01308"/>
    </source>
</evidence>
<evidence type="ECO:0000305" key="2"/>
<accession>P01319</accession>
<proteinExistence type="evidence at protein level"/>